<reference key="1">
    <citation type="journal article" date="2005" name="Science">
        <title>The genome of the basidiomycetous yeast and human pathogen Cryptococcus neoformans.</title>
        <authorList>
            <person name="Loftus B.J."/>
            <person name="Fung E."/>
            <person name="Roncaglia P."/>
            <person name="Rowley D."/>
            <person name="Amedeo P."/>
            <person name="Bruno D."/>
            <person name="Vamathevan J."/>
            <person name="Miranda M."/>
            <person name="Anderson I.J."/>
            <person name="Fraser J.A."/>
            <person name="Allen J.E."/>
            <person name="Bosdet I.E."/>
            <person name="Brent M.R."/>
            <person name="Chiu R."/>
            <person name="Doering T.L."/>
            <person name="Donlin M.J."/>
            <person name="D'Souza C.A."/>
            <person name="Fox D.S."/>
            <person name="Grinberg V."/>
            <person name="Fu J."/>
            <person name="Fukushima M."/>
            <person name="Haas B.J."/>
            <person name="Huang J.C."/>
            <person name="Janbon G."/>
            <person name="Jones S.J.M."/>
            <person name="Koo H.L."/>
            <person name="Krzywinski M.I."/>
            <person name="Kwon-Chung K.J."/>
            <person name="Lengeler K.B."/>
            <person name="Maiti R."/>
            <person name="Marra M.A."/>
            <person name="Marra R.E."/>
            <person name="Mathewson C.A."/>
            <person name="Mitchell T.G."/>
            <person name="Pertea M."/>
            <person name="Riggs F.R."/>
            <person name="Salzberg S.L."/>
            <person name="Schein J.E."/>
            <person name="Shvartsbeyn A."/>
            <person name="Shin H."/>
            <person name="Shumway M."/>
            <person name="Specht C.A."/>
            <person name="Suh B.B."/>
            <person name="Tenney A."/>
            <person name="Utterback T.R."/>
            <person name="Wickes B.L."/>
            <person name="Wortman J.R."/>
            <person name="Wye N.H."/>
            <person name="Kronstad J.W."/>
            <person name="Lodge J.K."/>
            <person name="Heitman J."/>
            <person name="Davis R.W."/>
            <person name="Fraser C.M."/>
            <person name="Hyman R.W."/>
        </authorList>
    </citation>
    <scope>NUCLEOTIDE SEQUENCE [LARGE SCALE GENOMIC DNA]</scope>
    <source>
        <strain>JEC21 / ATCC MYA-565</strain>
    </source>
</reference>
<sequence>MAFTCSDIFKIILAIILPPLGVFLERGCGADLLINILLTILGYIPGIIHALYIILKY</sequence>
<gene>
    <name type="primary">PMP3</name>
    <name type="ordered locus">CNC01010</name>
</gene>
<accession>P0CS18</accession>
<accession>Q55V58</accession>
<accession>Q5KL24</accession>
<evidence type="ECO:0000250" key="1"/>
<evidence type="ECO:0000255" key="2"/>
<evidence type="ECO:0000305" key="3"/>
<dbReference type="EMBL" id="AE017343">
    <property type="protein sequence ID" value="AAW42114.1"/>
    <property type="molecule type" value="Genomic_DNA"/>
</dbReference>
<dbReference type="RefSeq" id="XP_569421.1">
    <property type="nucleotide sequence ID" value="XM_569421.1"/>
</dbReference>
<dbReference type="SMR" id="P0CS18"/>
<dbReference type="FunCoup" id="P0CS18">
    <property type="interactions" value="124"/>
</dbReference>
<dbReference type="STRING" id="214684.P0CS18"/>
<dbReference type="PaxDb" id="214684-P0CS18"/>
<dbReference type="EnsemblFungi" id="AAW42114">
    <property type="protein sequence ID" value="AAW42114"/>
    <property type="gene ID" value="CNC01010"/>
</dbReference>
<dbReference type="VEuPathDB" id="FungiDB:CNC01010"/>
<dbReference type="eggNOG" id="KOG1773">
    <property type="taxonomic scope" value="Eukaryota"/>
</dbReference>
<dbReference type="HOGENOM" id="CLU_107649_6_2_1"/>
<dbReference type="InParanoid" id="P0CS18"/>
<dbReference type="OMA" id="VHAIWVI"/>
<dbReference type="OrthoDB" id="2802411at2759"/>
<dbReference type="Proteomes" id="UP000002149">
    <property type="component" value="Chromosome 3"/>
</dbReference>
<dbReference type="GO" id="GO:0005886">
    <property type="term" value="C:plasma membrane"/>
    <property type="evidence" value="ECO:0007669"/>
    <property type="project" value="UniProtKB-SubCell"/>
</dbReference>
<dbReference type="InterPro" id="IPR000612">
    <property type="entry name" value="PMP3"/>
</dbReference>
<dbReference type="PANTHER" id="PTHR21659">
    <property type="entry name" value="HYDROPHOBIC PROTEIN RCI2 LOW TEMPERATURE AND SALT RESPONSIVE PROTEIN LTI6 -RELATED"/>
    <property type="match status" value="1"/>
</dbReference>
<dbReference type="PANTHER" id="PTHR21659:SF42">
    <property type="entry name" value="UPF0057 MEMBRANE PROTEIN ZK632.10-RELATED"/>
    <property type="match status" value="1"/>
</dbReference>
<dbReference type="Pfam" id="PF01679">
    <property type="entry name" value="Pmp3"/>
    <property type="match status" value="1"/>
</dbReference>
<dbReference type="PROSITE" id="PS01309">
    <property type="entry name" value="UPF0057"/>
    <property type="match status" value="1"/>
</dbReference>
<keyword id="KW-1003">Cell membrane</keyword>
<keyword id="KW-0472">Membrane</keyword>
<keyword id="KW-1185">Reference proteome</keyword>
<keyword id="KW-0812">Transmembrane</keyword>
<keyword id="KW-1133">Transmembrane helix</keyword>
<proteinExistence type="inferred from homology"/>
<organism>
    <name type="scientific">Cryptococcus neoformans var. neoformans serotype D (strain JEC21 / ATCC MYA-565)</name>
    <name type="common">Filobasidiella neoformans</name>
    <dbReference type="NCBI Taxonomy" id="214684"/>
    <lineage>
        <taxon>Eukaryota</taxon>
        <taxon>Fungi</taxon>
        <taxon>Dikarya</taxon>
        <taxon>Basidiomycota</taxon>
        <taxon>Agaricomycotina</taxon>
        <taxon>Tremellomycetes</taxon>
        <taxon>Tremellales</taxon>
        <taxon>Cryptococcaceae</taxon>
        <taxon>Cryptococcus</taxon>
        <taxon>Cryptococcus neoformans species complex</taxon>
    </lineage>
</organism>
<comment type="function">
    <text evidence="1">Plays a role in the regulation of membrane potential. Could mediate a proton leak (By similarity).</text>
</comment>
<comment type="subcellular location">
    <subcellularLocation>
        <location evidence="3">Cell membrane</location>
        <topology evidence="3">Multi-pass membrane protein</topology>
    </subcellularLocation>
</comment>
<comment type="similarity">
    <text evidence="3">Belongs to the UPF0057 (PMP3) family.</text>
</comment>
<protein>
    <recommendedName>
        <fullName>Plasma membrane proteolipid 3</fullName>
    </recommendedName>
</protein>
<name>PMP3_CRYNJ</name>
<feature type="chain" id="PRO_0000247910" description="Plasma membrane proteolipid 3">
    <location>
        <begin position="1"/>
        <end position="57"/>
    </location>
</feature>
<feature type="transmembrane region" description="Helical" evidence="2">
    <location>
        <begin position="3"/>
        <end position="23"/>
    </location>
</feature>
<feature type="transmembrane region" description="Helical" evidence="2">
    <location>
        <begin position="34"/>
        <end position="54"/>
    </location>
</feature>